<name>TRMFO_PHEZH</name>
<dbReference type="EC" id="2.1.1.74" evidence="1"/>
<dbReference type="EMBL" id="CP000747">
    <property type="protein sequence ID" value="ACG78360.1"/>
    <property type="molecule type" value="Genomic_DNA"/>
</dbReference>
<dbReference type="RefSeq" id="WP_012522502.1">
    <property type="nucleotide sequence ID" value="NC_011144.1"/>
</dbReference>
<dbReference type="SMR" id="B4RDH0"/>
<dbReference type="STRING" id="450851.PHZ_c1949"/>
<dbReference type="KEGG" id="pzu:PHZ_c1949"/>
<dbReference type="eggNOG" id="COG1206">
    <property type="taxonomic scope" value="Bacteria"/>
</dbReference>
<dbReference type="HOGENOM" id="CLU_033057_1_0_5"/>
<dbReference type="OrthoDB" id="9803114at2"/>
<dbReference type="Proteomes" id="UP000001868">
    <property type="component" value="Chromosome"/>
</dbReference>
<dbReference type="GO" id="GO:0005829">
    <property type="term" value="C:cytosol"/>
    <property type="evidence" value="ECO:0007669"/>
    <property type="project" value="TreeGrafter"/>
</dbReference>
<dbReference type="GO" id="GO:0050660">
    <property type="term" value="F:flavin adenine dinucleotide binding"/>
    <property type="evidence" value="ECO:0007669"/>
    <property type="project" value="UniProtKB-UniRule"/>
</dbReference>
<dbReference type="GO" id="GO:0047151">
    <property type="term" value="F:tRNA (uracil(54)-C5)-methyltransferase activity, 5,10-methylenetetrahydrofolate-dependent"/>
    <property type="evidence" value="ECO:0007669"/>
    <property type="project" value="UniProtKB-UniRule"/>
</dbReference>
<dbReference type="GO" id="GO:0030488">
    <property type="term" value="P:tRNA methylation"/>
    <property type="evidence" value="ECO:0007669"/>
    <property type="project" value="TreeGrafter"/>
</dbReference>
<dbReference type="GO" id="GO:0002098">
    <property type="term" value="P:tRNA wobble uridine modification"/>
    <property type="evidence" value="ECO:0007669"/>
    <property type="project" value="TreeGrafter"/>
</dbReference>
<dbReference type="Gene3D" id="3.50.50.60">
    <property type="entry name" value="FAD/NAD(P)-binding domain"/>
    <property type="match status" value="2"/>
</dbReference>
<dbReference type="HAMAP" id="MF_01037">
    <property type="entry name" value="TrmFO"/>
    <property type="match status" value="1"/>
</dbReference>
<dbReference type="InterPro" id="IPR036188">
    <property type="entry name" value="FAD/NAD-bd_sf"/>
</dbReference>
<dbReference type="InterPro" id="IPR002218">
    <property type="entry name" value="MnmG-rel"/>
</dbReference>
<dbReference type="InterPro" id="IPR020595">
    <property type="entry name" value="MnmG-rel_CS"/>
</dbReference>
<dbReference type="InterPro" id="IPR040131">
    <property type="entry name" value="MnmG_N"/>
</dbReference>
<dbReference type="InterPro" id="IPR004417">
    <property type="entry name" value="TrmFO"/>
</dbReference>
<dbReference type="NCBIfam" id="TIGR00137">
    <property type="entry name" value="gid_trmFO"/>
    <property type="match status" value="1"/>
</dbReference>
<dbReference type="NCBIfam" id="NF003739">
    <property type="entry name" value="PRK05335.1"/>
    <property type="match status" value="1"/>
</dbReference>
<dbReference type="PANTHER" id="PTHR11806">
    <property type="entry name" value="GLUCOSE INHIBITED DIVISION PROTEIN A"/>
    <property type="match status" value="1"/>
</dbReference>
<dbReference type="PANTHER" id="PTHR11806:SF2">
    <property type="entry name" value="METHYLENETETRAHYDROFOLATE--TRNA-(URACIL-5-)-METHYLTRANSFERASE TRMFO"/>
    <property type="match status" value="1"/>
</dbReference>
<dbReference type="Pfam" id="PF01134">
    <property type="entry name" value="GIDA"/>
    <property type="match status" value="1"/>
</dbReference>
<dbReference type="SUPFAM" id="SSF51905">
    <property type="entry name" value="FAD/NAD(P)-binding domain"/>
    <property type="match status" value="1"/>
</dbReference>
<dbReference type="PROSITE" id="PS01281">
    <property type="entry name" value="GIDA_2"/>
    <property type="match status" value="1"/>
</dbReference>
<accession>B4RDH0</accession>
<comment type="function">
    <text evidence="1">Catalyzes the folate-dependent formation of 5-methyl-uridine at position 54 (M-5-U54) in all tRNAs.</text>
</comment>
<comment type="catalytic activity">
    <reaction evidence="1">
        <text>uridine(54) in tRNA + (6R)-5,10-methylene-5,6,7,8-tetrahydrofolate + NADH + H(+) = 5-methyluridine(54) in tRNA + (6S)-5,6,7,8-tetrahydrofolate + NAD(+)</text>
        <dbReference type="Rhea" id="RHEA:16873"/>
        <dbReference type="Rhea" id="RHEA-COMP:10167"/>
        <dbReference type="Rhea" id="RHEA-COMP:10193"/>
        <dbReference type="ChEBI" id="CHEBI:15378"/>
        <dbReference type="ChEBI" id="CHEBI:15636"/>
        <dbReference type="ChEBI" id="CHEBI:57453"/>
        <dbReference type="ChEBI" id="CHEBI:57540"/>
        <dbReference type="ChEBI" id="CHEBI:57945"/>
        <dbReference type="ChEBI" id="CHEBI:65315"/>
        <dbReference type="ChEBI" id="CHEBI:74447"/>
        <dbReference type="EC" id="2.1.1.74"/>
    </reaction>
</comment>
<comment type="catalytic activity">
    <reaction evidence="1">
        <text>uridine(54) in tRNA + (6R)-5,10-methylene-5,6,7,8-tetrahydrofolate + NADPH + H(+) = 5-methyluridine(54) in tRNA + (6S)-5,6,7,8-tetrahydrofolate + NADP(+)</text>
        <dbReference type="Rhea" id="RHEA:62372"/>
        <dbReference type="Rhea" id="RHEA-COMP:10167"/>
        <dbReference type="Rhea" id="RHEA-COMP:10193"/>
        <dbReference type="ChEBI" id="CHEBI:15378"/>
        <dbReference type="ChEBI" id="CHEBI:15636"/>
        <dbReference type="ChEBI" id="CHEBI:57453"/>
        <dbReference type="ChEBI" id="CHEBI:57783"/>
        <dbReference type="ChEBI" id="CHEBI:58349"/>
        <dbReference type="ChEBI" id="CHEBI:65315"/>
        <dbReference type="ChEBI" id="CHEBI:74447"/>
        <dbReference type="EC" id="2.1.1.74"/>
    </reaction>
</comment>
<comment type="cofactor">
    <cofactor evidence="1">
        <name>FAD</name>
        <dbReference type="ChEBI" id="CHEBI:57692"/>
    </cofactor>
</comment>
<comment type="subcellular location">
    <subcellularLocation>
        <location evidence="1">Cytoplasm</location>
    </subcellularLocation>
</comment>
<comment type="similarity">
    <text evidence="1">Belongs to the MnmG family. TrmFO subfamily.</text>
</comment>
<feature type="chain" id="PRO_1000135890" description="Methylenetetrahydrofolate--tRNA-(uracil-5-)-methyltransferase TrmFO">
    <location>
        <begin position="1"/>
        <end position="466"/>
    </location>
</feature>
<feature type="binding site" evidence="1">
    <location>
        <begin position="10"/>
        <end position="15"/>
    </location>
    <ligand>
        <name>FAD</name>
        <dbReference type="ChEBI" id="CHEBI:57692"/>
    </ligand>
</feature>
<reference key="1">
    <citation type="journal article" date="2008" name="BMC Genomics">
        <title>Complete genome of Phenylobacterium zucineum - a novel facultative intracellular bacterium isolated from human erythroleukemia cell line K562.</title>
        <authorList>
            <person name="Luo Y."/>
            <person name="Xu X."/>
            <person name="Ding Z."/>
            <person name="Liu Z."/>
            <person name="Zhang B."/>
            <person name="Yan Z."/>
            <person name="Sun J."/>
            <person name="Hu S."/>
            <person name="Hu X."/>
        </authorList>
    </citation>
    <scope>NUCLEOTIDE SEQUENCE [LARGE SCALE GENOMIC DNA]</scope>
    <source>
        <strain>HLK1</strain>
    </source>
</reference>
<proteinExistence type="inferred from homology"/>
<keyword id="KW-0963">Cytoplasm</keyword>
<keyword id="KW-0274">FAD</keyword>
<keyword id="KW-0285">Flavoprotein</keyword>
<keyword id="KW-0489">Methyltransferase</keyword>
<keyword id="KW-0520">NAD</keyword>
<keyword id="KW-0521">NADP</keyword>
<keyword id="KW-1185">Reference proteome</keyword>
<keyword id="KW-0808">Transferase</keyword>
<keyword id="KW-0819">tRNA processing</keyword>
<protein>
    <recommendedName>
        <fullName evidence="1">Methylenetetrahydrofolate--tRNA-(uracil-5-)-methyltransferase TrmFO</fullName>
        <ecNumber evidence="1">2.1.1.74</ecNumber>
    </recommendedName>
    <alternativeName>
        <fullName evidence="1">Folate-dependent tRNA (uracil-5-)-methyltransferase</fullName>
    </alternativeName>
    <alternativeName>
        <fullName evidence="1">Folate-dependent tRNA(M-5-U54)-methyltransferase</fullName>
    </alternativeName>
</protein>
<sequence length="466" mass="50058">MSMNPIHVVGGGLAGSEAAWQIAEAGVPVVLHEMRPVRRTDAHHTDRLAELVCSNSFRADDWTGNAVGLLHAEMRRLGSIIMSAGDAHQVPAGGALAVDREGFSQAVTERLEAHPLVTIAREEIAGLPPQDWDSVILATGPLTSPALADAVLKLTGEDQLSFFDAIAPIVHFESIDMDVAWRQSRYDKAGPGGDAAAYINCPMTEAQYEAFIDALLAAPKAEFKEWEHVPYFDGCLPIEVMAERGRETLRHGPMKPVGLTNAHRPDEKPHAVVQLRQDNALGTLWNMVGFQTKLKHGAQTEVFRMIPGLEKAVFARLGGLHRNTFINSPRLLDGVLRLKAQPRLRFAGQVTGVEGYVESAAVGLLAGRFAAAERLGRPAVAPPPTTALGGLIGHITGGHLEGGSGSFQPMNINYGLIPPIAPPKRDAEGRRLGAKEKTRIKKRLVGERALADLEAWLSGAQAVAAE</sequence>
<gene>
    <name evidence="1" type="primary">trmFO</name>
    <name type="ordered locus">PHZ_c1949</name>
</gene>
<organism>
    <name type="scientific">Phenylobacterium zucineum (strain HLK1)</name>
    <dbReference type="NCBI Taxonomy" id="450851"/>
    <lineage>
        <taxon>Bacteria</taxon>
        <taxon>Pseudomonadati</taxon>
        <taxon>Pseudomonadota</taxon>
        <taxon>Alphaproteobacteria</taxon>
        <taxon>Caulobacterales</taxon>
        <taxon>Caulobacteraceae</taxon>
        <taxon>Phenylobacterium</taxon>
    </lineage>
</organism>
<evidence type="ECO:0000255" key="1">
    <source>
        <dbReference type="HAMAP-Rule" id="MF_01037"/>
    </source>
</evidence>